<proteinExistence type="inferred from homology"/>
<dbReference type="EMBL" id="CP000232">
    <property type="protein sequence ID" value="ABC19673.1"/>
    <property type="molecule type" value="Genomic_DNA"/>
</dbReference>
<dbReference type="RefSeq" id="YP_430216.1">
    <property type="nucleotide sequence ID" value="NC_007644.1"/>
</dbReference>
<dbReference type="SMR" id="Q2RIR6"/>
<dbReference type="STRING" id="264732.Moth_1360"/>
<dbReference type="EnsemblBacteria" id="ABC19673">
    <property type="protein sequence ID" value="ABC19673"/>
    <property type="gene ID" value="Moth_1360"/>
</dbReference>
<dbReference type="KEGG" id="mta:Moth_1360"/>
<dbReference type="PATRIC" id="fig|264732.11.peg.1459"/>
<dbReference type="eggNOG" id="COG1386">
    <property type="taxonomic scope" value="Bacteria"/>
</dbReference>
<dbReference type="HOGENOM" id="CLU_045647_5_2_9"/>
<dbReference type="OrthoDB" id="9806226at2"/>
<dbReference type="GO" id="GO:0005737">
    <property type="term" value="C:cytoplasm"/>
    <property type="evidence" value="ECO:0007669"/>
    <property type="project" value="UniProtKB-SubCell"/>
</dbReference>
<dbReference type="GO" id="GO:0051301">
    <property type="term" value="P:cell division"/>
    <property type="evidence" value="ECO:0007669"/>
    <property type="project" value="UniProtKB-KW"/>
</dbReference>
<dbReference type="GO" id="GO:0051304">
    <property type="term" value="P:chromosome separation"/>
    <property type="evidence" value="ECO:0007669"/>
    <property type="project" value="InterPro"/>
</dbReference>
<dbReference type="GO" id="GO:0006260">
    <property type="term" value="P:DNA replication"/>
    <property type="evidence" value="ECO:0007669"/>
    <property type="project" value="UniProtKB-UniRule"/>
</dbReference>
<dbReference type="Gene3D" id="1.10.10.10">
    <property type="entry name" value="Winged helix-like DNA-binding domain superfamily/Winged helix DNA-binding domain"/>
    <property type="match status" value="2"/>
</dbReference>
<dbReference type="HAMAP" id="MF_01804">
    <property type="entry name" value="ScpB"/>
    <property type="match status" value="1"/>
</dbReference>
<dbReference type="InterPro" id="IPR005234">
    <property type="entry name" value="ScpB_csome_segregation"/>
</dbReference>
<dbReference type="InterPro" id="IPR036388">
    <property type="entry name" value="WH-like_DNA-bd_sf"/>
</dbReference>
<dbReference type="InterPro" id="IPR036390">
    <property type="entry name" value="WH_DNA-bd_sf"/>
</dbReference>
<dbReference type="NCBIfam" id="TIGR00281">
    <property type="entry name" value="SMC-Scp complex subunit ScpB"/>
    <property type="match status" value="1"/>
</dbReference>
<dbReference type="PANTHER" id="PTHR34298">
    <property type="entry name" value="SEGREGATION AND CONDENSATION PROTEIN B"/>
    <property type="match status" value="1"/>
</dbReference>
<dbReference type="PANTHER" id="PTHR34298:SF2">
    <property type="entry name" value="SEGREGATION AND CONDENSATION PROTEIN B"/>
    <property type="match status" value="1"/>
</dbReference>
<dbReference type="Pfam" id="PF04079">
    <property type="entry name" value="SMC_ScpB"/>
    <property type="match status" value="1"/>
</dbReference>
<dbReference type="PIRSF" id="PIRSF019345">
    <property type="entry name" value="ScpB"/>
    <property type="match status" value="1"/>
</dbReference>
<dbReference type="SUPFAM" id="SSF46785">
    <property type="entry name" value="Winged helix' DNA-binding domain"/>
    <property type="match status" value="2"/>
</dbReference>
<keyword id="KW-0131">Cell cycle</keyword>
<keyword id="KW-0132">Cell division</keyword>
<keyword id="KW-0159">Chromosome partition</keyword>
<keyword id="KW-0963">Cytoplasm</keyword>
<name>SCPB_MOOTA</name>
<feature type="chain" id="PRO_0000273304" description="Segregation and condensation protein B">
    <location>
        <begin position="1"/>
        <end position="195"/>
    </location>
</feature>
<feature type="region of interest" description="Disordered" evidence="2">
    <location>
        <begin position="169"/>
        <end position="195"/>
    </location>
</feature>
<evidence type="ECO:0000255" key="1">
    <source>
        <dbReference type="HAMAP-Rule" id="MF_01804"/>
    </source>
</evidence>
<evidence type="ECO:0000256" key="2">
    <source>
        <dbReference type="SAM" id="MobiDB-lite"/>
    </source>
</evidence>
<reference key="1">
    <citation type="journal article" date="2008" name="Environ. Microbiol.">
        <title>The complete genome sequence of Moorella thermoacetica (f. Clostridium thermoaceticum).</title>
        <authorList>
            <person name="Pierce E."/>
            <person name="Xie G."/>
            <person name="Barabote R.D."/>
            <person name="Saunders E."/>
            <person name="Han C.S."/>
            <person name="Detter J.C."/>
            <person name="Richardson P."/>
            <person name="Brettin T.S."/>
            <person name="Das A."/>
            <person name="Ljungdahl L.G."/>
            <person name="Ragsdale S.W."/>
        </authorList>
    </citation>
    <scope>NUCLEOTIDE SEQUENCE [LARGE SCALE GENOMIC DNA]</scope>
    <source>
        <strain>ATCC 39073 / JCM 9320</strain>
    </source>
</reference>
<accession>Q2RIR6</accession>
<comment type="function">
    <text evidence="1">Participates in chromosomal partition during cell division. May act via the formation of a condensin-like complex containing Smc and ScpA that pull DNA away from mid-cell into both cell halves.</text>
</comment>
<comment type="subunit">
    <text evidence="1">Homodimer. Homodimerization may be required to stabilize the binding of ScpA to the Smc head domains. Component of a cohesin-like complex composed of ScpA, ScpB and the Smc homodimer, in which ScpA and ScpB bind to the head domain of Smc. The presence of the three proteins is required for the association of the complex with DNA.</text>
</comment>
<comment type="subcellular location">
    <subcellularLocation>
        <location evidence="1">Cytoplasm</location>
    </subcellularLocation>
    <text evidence="1">Associated with two foci at the outer edges of the nucleoid region in young cells, and at four foci within both cell halves in older cells.</text>
</comment>
<comment type="similarity">
    <text evidence="1">Belongs to the ScpB family.</text>
</comment>
<organism>
    <name type="scientific">Moorella thermoacetica (strain ATCC 39073 / JCM 9320)</name>
    <dbReference type="NCBI Taxonomy" id="264732"/>
    <lineage>
        <taxon>Bacteria</taxon>
        <taxon>Bacillati</taxon>
        <taxon>Bacillota</taxon>
        <taxon>Clostridia</taxon>
        <taxon>Moorellales</taxon>
        <taxon>Moorellaceae</taxon>
        <taxon>Moorella</taxon>
    </lineage>
</organism>
<sequence length="195" mass="21161">MPLFFSDNLRAALECLLFVAGGPVSVDSLAACLGVKPGDVDELAAELQELYAREERGLQIRAVAGGYQMCTRPEFASYCEALLRPELPALSRAALETLAIIAYRQPVTRTEMEYIRGVKVDGVLNTLISRGLVQEVGRKEAPGRPILYGTTPKFLEFFGLKDLKELPPLEDVAASQENSREAGGRGSIPGHPGEE</sequence>
<protein>
    <recommendedName>
        <fullName evidence="1">Segregation and condensation protein B</fullName>
    </recommendedName>
</protein>
<gene>
    <name evidence="1" type="primary">scpB</name>
    <name type="ordered locus">Moth_1360</name>
</gene>